<dbReference type="EMBL" id="CP000878">
    <property type="protein sequence ID" value="ABX09595.1"/>
    <property type="molecule type" value="Genomic_DNA"/>
</dbReference>
<dbReference type="RefSeq" id="WP_012196215.1">
    <property type="nucleotide sequence ID" value="NC_009976.1"/>
</dbReference>
<dbReference type="SMR" id="A9BCN3"/>
<dbReference type="STRING" id="93059.P9211_16641"/>
<dbReference type="KEGG" id="pmj:P9211_16641"/>
<dbReference type="eggNOG" id="COG0097">
    <property type="taxonomic scope" value="Bacteria"/>
</dbReference>
<dbReference type="HOGENOM" id="CLU_065464_1_2_3"/>
<dbReference type="OrthoDB" id="9805007at2"/>
<dbReference type="Proteomes" id="UP000000788">
    <property type="component" value="Chromosome"/>
</dbReference>
<dbReference type="GO" id="GO:0022625">
    <property type="term" value="C:cytosolic large ribosomal subunit"/>
    <property type="evidence" value="ECO:0007669"/>
    <property type="project" value="TreeGrafter"/>
</dbReference>
<dbReference type="GO" id="GO:0019843">
    <property type="term" value="F:rRNA binding"/>
    <property type="evidence" value="ECO:0007669"/>
    <property type="project" value="UniProtKB-UniRule"/>
</dbReference>
<dbReference type="GO" id="GO:0003735">
    <property type="term" value="F:structural constituent of ribosome"/>
    <property type="evidence" value="ECO:0007669"/>
    <property type="project" value="InterPro"/>
</dbReference>
<dbReference type="GO" id="GO:0002181">
    <property type="term" value="P:cytoplasmic translation"/>
    <property type="evidence" value="ECO:0007669"/>
    <property type="project" value="TreeGrafter"/>
</dbReference>
<dbReference type="FunFam" id="3.90.930.12:FF:000001">
    <property type="entry name" value="50S ribosomal protein L6"/>
    <property type="match status" value="1"/>
</dbReference>
<dbReference type="FunFam" id="3.90.930.12:FF:000002">
    <property type="entry name" value="50S ribosomal protein L6"/>
    <property type="match status" value="1"/>
</dbReference>
<dbReference type="Gene3D" id="3.90.930.12">
    <property type="entry name" value="Ribosomal protein L6, alpha-beta domain"/>
    <property type="match status" value="2"/>
</dbReference>
<dbReference type="HAMAP" id="MF_01365_B">
    <property type="entry name" value="Ribosomal_uL6_B"/>
    <property type="match status" value="1"/>
</dbReference>
<dbReference type="InterPro" id="IPR000702">
    <property type="entry name" value="Ribosomal_uL6-like"/>
</dbReference>
<dbReference type="InterPro" id="IPR036789">
    <property type="entry name" value="Ribosomal_uL6-like_a/b-dom_sf"/>
</dbReference>
<dbReference type="InterPro" id="IPR020040">
    <property type="entry name" value="Ribosomal_uL6_a/b-dom"/>
</dbReference>
<dbReference type="InterPro" id="IPR019906">
    <property type="entry name" value="Ribosomal_uL6_bac-type"/>
</dbReference>
<dbReference type="InterPro" id="IPR002358">
    <property type="entry name" value="Ribosomal_uL6_CS"/>
</dbReference>
<dbReference type="NCBIfam" id="TIGR03654">
    <property type="entry name" value="L6_bact"/>
    <property type="match status" value="1"/>
</dbReference>
<dbReference type="PANTHER" id="PTHR11655">
    <property type="entry name" value="60S/50S RIBOSOMAL PROTEIN L6/L9"/>
    <property type="match status" value="1"/>
</dbReference>
<dbReference type="PANTHER" id="PTHR11655:SF14">
    <property type="entry name" value="LARGE RIBOSOMAL SUBUNIT PROTEIN UL6M"/>
    <property type="match status" value="1"/>
</dbReference>
<dbReference type="Pfam" id="PF00347">
    <property type="entry name" value="Ribosomal_L6"/>
    <property type="match status" value="2"/>
</dbReference>
<dbReference type="PIRSF" id="PIRSF002162">
    <property type="entry name" value="Ribosomal_L6"/>
    <property type="match status" value="1"/>
</dbReference>
<dbReference type="PRINTS" id="PR00059">
    <property type="entry name" value="RIBOSOMALL6"/>
</dbReference>
<dbReference type="SUPFAM" id="SSF56053">
    <property type="entry name" value="Ribosomal protein L6"/>
    <property type="match status" value="2"/>
</dbReference>
<dbReference type="PROSITE" id="PS00525">
    <property type="entry name" value="RIBOSOMAL_L6_1"/>
    <property type="match status" value="1"/>
</dbReference>
<sequence length="179" mass="19075">MSRIGKQPIPVPEKVAVELDGLSLTVKGPKGELSRTLPEGVSISQVDNSIVVSAINSKRKSRERHGLSRSLVANMVEGVSKGYSKKLEIVGVGSRAQVKGKNLIVSAGYSHPVEVIPPDGITFVVENNTNVTVSGIDKELVGNEAAKIRAIRPPEPYKGKGIKYAGERIIRKAGKSGKK</sequence>
<feature type="chain" id="PRO_1000144030" description="Large ribosomal subunit protein uL6">
    <location>
        <begin position="1"/>
        <end position="179"/>
    </location>
</feature>
<keyword id="KW-1185">Reference proteome</keyword>
<keyword id="KW-0687">Ribonucleoprotein</keyword>
<keyword id="KW-0689">Ribosomal protein</keyword>
<keyword id="KW-0694">RNA-binding</keyword>
<keyword id="KW-0699">rRNA-binding</keyword>
<name>RL6_PROM4</name>
<comment type="function">
    <text evidence="1">This protein binds to the 23S rRNA, and is important in its secondary structure. It is located near the subunit interface in the base of the L7/L12 stalk, and near the tRNA binding site of the peptidyltransferase center.</text>
</comment>
<comment type="subunit">
    <text evidence="1">Part of the 50S ribosomal subunit.</text>
</comment>
<comment type="similarity">
    <text evidence="1">Belongs to the universal ribosomal protein uL6 family.</text>
</comment>
<gene>
    <name evidence="1" type="primary">rplF</name>
    <name evidence="1" type="synonym">rpl6</name>
    <name type="ordered locus">P9211_16641</name>
</gene>
<organism>
    <name type="scientific">Prochlorococcus marinus (strain MIT 9211)</name>
    <dbReference type="NCBI Taxonomy" id="93059"/>
    <lineage>
        <taxon>Bacteria</taxon>
        <taxon>Bacillati</taxon>
        <taxon>Cyanobacteriota</taxon>
        <taxon>Cyanophyceae</taxon>
        <taxon>Synechococcales</taxon>
        <taxon>Prochlorococcaceae</taxon>
        <taxon>Prochlorococcus</taxon>
    </lineage>
</organism>
<proteinExistence type="inferred from homology"/>
<accession>A9BCN3</accession>
<reference key="1">
    <citation type="journal article" date="2007" name="PLoS Genet.">
        <title>Patterns and implications of gene gain and loss in the evolution of Prochlorococcus.</title>
        <authorList>
            <person name="Kettler G.C."/>
            <person name="Martiny A.C."/>
            <person name="Huang K."/>
            <person name="Zucker J."/>
            <person name="Coleman M.L."/>
            <person name="Rodrigue S."/>
            <person name="Chen F."/>
            <person name="Lapidus A."/>
            <person name="Ferriera S."/>
            <person name="Johnson J."/>
            <person name="Steglich C."/>
            <person name="Church G.M."/>
            <person name="Richardson P."/>
            <person name="Chisholm S.W."/>
        </authorList>
    </citation>
    <scope>NUCLEOTIDE SEQUENCE [LARGE SCALE GENOMIC DNA]</scope>
    <source>
        <strain>MIT 9211</strain>
    </source>
</reference>
<protein>
    <recommendedName>
        <fullName evidence="1">Large ribosomal subunit protein uL6</fullName>
    </recommendedName>
    <alternativeName>
        <fullName evidence="2">50S ribosomal protein L6</fullName>
    </alternativeName>
</protein>
<evidence type="ECO:0000255" key="1">
    <source>
        <dbReference type="HAMAP-Rule" id="MF_01365"/>
    </source>
</evidence>
<evidence type="ECO:0000305" key="2"/>